<evidence type="ECO:0000250" key="1">
    <source>
        <dbReference type="UniProtKB" id="Q9BSM1"/>
    </source>
</evidence>
<evidence type="ECO:0000255" key="2">
    <source>
        <dbReference type="PROSITE-ProRule" id="PRU00175"/>
    </source>
</evidence>
<keyword id="KW-0479">Metal-binding</keyword>
<keyword id="KW-0539">Nucleus</keyword>
<keyword id="KW-1185">Reference proteome</keyword>
<keyword id="KW-0678">Repressor</keyword>
<keyword id="KW-0804">Transcription</keyword>
<keyword id="KW-0805">Transcription regulation</keyword>
<keyword id="KW-0862">Zinc</keyword>
<keyword id="KW-0863">Zinc-finger</keyword>
<accession>Q7ZYZ7</accession>
<gene>
    <name type="primary">pcgf1</name>
    <name type="ORF">si:zc207o21.2</name>
</gene>
<dbReference type="EMBL" id="AL831789">
    <property type="protein sequence ID" value="CAD61262.1"/>
    <property type="molecule type" value="Genomic_DNA"/>
</dbReference>
<dbReference type="RefSeq" id="NP_001007159.1">
    <property type="nucleotide sequence ID" value="NM_001007158.2"/>
</dbReference>
<dbReference type="SMR" id="Q7ZYZ7"/>
<dbReference type="FunCoup" id="Q7ZYZ7">
    <property type="interactions" value="413"/>
</dbReference>
<dbReference type="STRING" id="7955.ENSDARP00000001039"/>
<dbReference type="PaxDb" id="7955-ENSDARP00000001039"/>
<dbReference type="GeneID" id="368900"/>
<dbReference type="KEGG" id="dre:368900"/>
<dbReference type="AGR" id="ZFIN:ZDB-GENE-030616-605"/>
<dbReference type="CTD" id="84759"/>
<dbReference type="ZFIN" id="ZDB-GENE-030616-605">
    <property type="gene designation" value="pcgf1"/>
</dbReference>
<dbReference type="eggNOG" id="KOG2660">
    <property type="taxonomic scope" value="Eukaryota"/>
</dbReference>
<dbReference type="HOGENOM" id="CLU_046427_4_2_1"/>
<dbReference type="InParanoid" id="Q7ZYZ7"/>
<dbReference type="OrthoDB" id="1305878at2759"/>
<dbReference type="PhylomeDB" id="Q7ZYZ7"/>
<dbReference type="PRO" id="PR:Q7ZYZ7"/>
<dbReference type="Proteomes" id="UP000000437">
    <property type="component" value="Chromosome 14"/>
</dbReference>
<dbReference type="GO" id="GO:0031519">
    <property type="term" value="C:PcG protein complex"/>
    <property type="evidence" value="ECO:0000250"/>
    <property type="project" value="UniProtKB"/>
</dbReference>
<dbReference type="GO" id="GO:0035102">
    <property type="term" value="C:PRC1 complex"/>
    <property type="evidence" value="ECO:0000318"/>
    <property type="project" value="GO_Central"/>
</dbReference>
<dbReference type="GO" id="GO:1990841">
    <property type="term" value="F:promoter-specific chromatin binding"/>
    <property type="evidence" value="ECO:0000318"/>
    <property type="project" value="GO_Central"/>
</dbReference>
<dbReference type="GO" id="GO:0008270">
    <property type="term" value="F:zinc ion binding"/>
    <property type="evidence" value="ECO:0007669"/>
    <property type="project" value="UniProtKB-KW"/>
</dbReference>
<dbReference type="GO" id="GO:0006338">
    <property type="term" value="P:chromatin remodeling"/>
    <property type="evidence" value="ECO:0000250"/>
    <property type="project" value="UniProtKB"/>
</dbReference>
<dbReference type="GO" id="GO:0048589">
    <property type="term" value="P:developmental growth"/>
    <property type="evidence" value="ECO:0000315"/>
    <property type="project" value="ZFIN"/>
</dbReference>
<dbReference type="GO" id="GO:0000122">
    <property type="term" value="P:negative regulation of transcription by RNA polymerase II"/>
    <property type="evidence" value="ECO:0000318"/>
    <property type="project" value="GO_Central"/>
</dbReference>
<dbReference type="GO" id="GO:0021915">
    <property type="term" value="P:neural tube development"/>
    <property type="evidence" value="ECO:0000315"/>
    <property type="project" value="ZFIN"/>
</dbReference>
<dbReference type="CDD" id="cd17081">
    <property type="entry name" value="RAWUL_PCGF1"/>
    <property type="match status" value="1"/>
</dbReference>
<dbReference type="CDD" id="cd16733">
    <property type="entry name" value="RING-HC_PCGF1"/>
    <property type="match status" value="1"/>
</dbReference>
<dbReference type="FunFam" id="3.10.20.90:FF:000099">
    <property type="entry name" value="Polycomb group RING finger protein 1"/>
    <property type="match status" value="1"/>
</dbReference>
<dbReference type="FunFam" id="3.30.40.10:FF:000122">
    <property type="entry name" value="polycomb group RING finger protein 1"/>
    <property type="match status" value="1"/>
</dbReference>
<dbReference type="Gene3D" id="3.10.20.90">
    <property type="entry name" value="Phosphatidylinositol 3-kinase Catalytic Subunit, Chain A, domain 1"/>
    <property type="match status" value="1"/>
</dbReference>
<dbReference type="Gene3D" id="3.30.40.10">
    <property type="entry name" value="Zinc/RING finger domain, C3HC4 (zinc finger)"/>
    <property type="match status" value="1"/>
</dbReference>
<dbReference type="InterPro" id="IPR032443">
    <property type="entry name" value="RAWUL"/>
</dbReference>
<dbReference type="InterPro" id="IPR001841">
    <property type="entry name" value="Znf_RING"/>
</dbReference>
<dbReference type="InterPro" id="IPR013083">
    <property type="entry name" value="Znf_RING/FYVE/PHD"/>
</dbReference>
<dbReference type="InterPro" id="IPR017907">
    <property type="entry name" value="Znf_RING_CS"/>
</dbReference>
<dbReference type="PANTHER" id="PTHR10825:SF29">
    <property type="entry name" value="POLYCOMB GROUP RING FINGER PROTEIN 1"/>
    <property type="match status" value="1"/>
</dbReference>
<dbReference type="PANTHER" id="PTHR10825">
    <property type="entry name" value="RING FINGER DOMAIN-CONTAINING, POLYCOMB GROUP COMPONENT"/>
    <property type="match status" value="1"/>
</dbReference>
<dbReference type="Pfam" id="PF16207">
    <property type="entry name" value="RAWUL"/>
    <property type="match status" value="1"/>
</dbReference>
<dbReference type="Pfam" id="PF13923">
    <property type="entry name" value="zf-C3HC4_2"/>
    <property type="match status" value="1"/>
</dbReference>
<dbReference type="SMART" id="SM00184">
    <property type="entry name" value="RING"/>
    <property type="match status" value="1"/>
</dbReference>
<dbReference type="SUPFAM" id="SSF57850">
    <property type="entry name" value="RING/U-box"/>
    <property type="match status" value="1"/>
</dbReference>
<dbReference type="PROSITE" id="PS00518">
    <property type="entry name" value="ZF_RING_1"/>
    <property type="match status" value="1"/>
</dbReference>
<dbReference type="PROSITE" id="PS50089">
    <property type="entry name" value="ZF_RING_2"/>
    <property type="match status" value="1"/>
</dbReference>
<protein>
    <recommendedName>
        <fullName>Polycomb group RING finger protein 1</fullName>
    </recommendedName>
</protein>
<feature type="chain" id="PRO_0000277858" description="Polycomb group RING finger protein 1">
    <location>
        <begin position="1"/>
        <end position="261"/>
    </location>
</feature>
<feature type="zinc finger region" description="RING-type" evidence="2">
    <location>
        <begin position="45"/>
        <end position="84"/>
    </location>
</feature>
<comment type="function">
    <text evidence="1">Component of a Polycomb group (PcG) multiprotein PRC1-like complex, a complex class required to maintain the transcriptionally repressive state of many genes, including Hox genes, throughout development. PcG PRC1 complex acts via chromatin remodeling and modification of histones; it mediates monoubiquitination of histone H2A 'Lys-119', rendering chromatin heritably changed in its expressibility.</text>
</comment>
<comment type="subunit">
    <text evidence="1">Component of a PRC1-like complex.</text>
</comment>
<comment type="subcellular location">
    <subcellularLocation>
        <location evidence="1">Nucleus</location>
    </subcellularLocation>
</comment>
<name>PCGF1_DANRE</name>
<organism>
    <name type="scientific">Danio rerio</name>
    <name type="common">Zebrafish</name>
    <name type="synonym">Brachydanio rerio</name>
    <dbReference type="NCBI Taxonomy" id="7955"/>
    <lineage>
        <taxon>Eukaryota</taxon>
        <taxon>Metazoa</taxon>
        <taxon>Chordata</taxon>
        <taxon>Craniata</taxon>
        <taxon>Vertebrata</taxon>
        <taxon>Euteleostomi</taxon>
        <taxon>Actinopterygii</taxon>
        <taxon>Neopterygii</taxon>
        <taxon>Teleostei</taxon>
        <taxon>Ostariophysi</taxon>
        <taxon>Cypriniformes</taxon>
        <taxon>Danionidae</taxon>
        <taxon>Danioninae</taxon>
        <taxon>Danio</taxon>
    </lineage>
</organism>
<proteinExistence type="inferred from homology"/>
<sequence>MAEQGPMAIAMRLRNQLQNVYKLDPLRNEEEVKIKIKDLNEHIVCYLCAGYFIDATTITECLHTFCKSCIVKYLQTSKYCPMCNIKIHETQPLLNLKLDRVMQDIVYKLVPGLQESEDKRIKEFYQSRGLERIIQPSGEESVPDNTGLPYTSFDHSKAHFYRYDEQVSLCLERQSSSFSGKDKNKLTLQQKFVRCSVRAEVRHLRKVLCHRLNVEKHQVQMLFNNESLPDHMTMKRLWLSHWFGKAQPLVLHYTIKDKRTR</sequence>
<reference key="1">
    <citation type="journal article" date="2013" name="Nature">
        <title>The zebrafish reference genome sequence and its relationship to the human genome.</title>
        <authorList>
            <person name="Howe K."/>
            <person name="Clark M.D."/>
            <person name="Torroja C.F."/>
            <person name="Torrance J."/>
            <person name="Berthelot C."/>
            <person name="Muffato M."/>
            <person name="Collins J.E."/>
            <person name="Humphray S."/>
            <person name="McLaren K."/>
            <person name="Matthews L."/>
            <person name="McLaren S."/>
            <person name="Sealy I."/>
            <person name="Caccamo M."/>
            <person name="Churcher C."/>
            <person name="Scott C."/>
            <person name="Barrett J.C."/>
            <person name="Koch R."/>
            <person name="Rauch G.J."/>
            <person name="White S."/>
            <person name="Chow W."/>
            <person name="Kilian B."/>
            <person name="Quintais L.T."/>
            <person name="Guerra-Assuncao J.A."/>
            <person name="Zhou Y."/>
            <person name="Gu Y."/>
            <person name="Yen J."/>
            <person name="Vogel J.H."/>
            <person name="Eyre T."/>
            <person name="Redmond S."/>
            <person name="Banerjee R."/>
            <person name="Chi J."/>
            <person name="Fu B."/>
            <person name="Langley E."/>
            <person name="Maguire S.F."/>
            <person name="Laird G.K."/>
            <person name="Lloyd D."/>
            <person name="Kenyon E."/>
            <person name="Donaldson S."/>
            <person name="Sehra H."/>
            <person name="Almeida-King J."/>
            <person name="Loveland J."/>
            <person name="Trevanion S."/>
            <person name="Jones M."/>
            <person name="Quail M."/>
            <person name="Willey D."/>
            <person name="Hunt A."/>
            <person name="Burton J."/>
            <person name="Sims S."/>
            <person name="McLay K."/>
            <person name="Plumb B."/>
            <person name="Davis J."/>
            <person name="Clee C."/>
            <person name="Oliver K."/>
            <person name="Clark R."/>
            <person name="Riddle C."/>
            <person name="Elliot D."/>
            <person name="Threadgold G."/>
            <person name="Harden G."/>
            <person name="Ware D."/>
            <person name="Begum S."/>
            <person name="Mortimore B."/>
            <person name="Kerry G."/>
            <person name="Heath P."/>
            <person name="Phillimore B."/>
            <person name="Tracey A."/>
            <person name="Corby N."/>
            <person name="Dunn M."/>
            <person name="Johnson C."/>
            <person name="Wood J."/>
            <person name="Clark S."/>
            <person name="Pelan S."/>
            <person name="Griffiths G."/>
            <person name="Smith M."/>
            <person name="Glithero R."/>
            <person name="Howden P."/>
            <person name="Barker N."/>
            <person name="Lloyd C."/>
            <person name="Stevens C."/>
            <person name="Harley J."/>
            <person name="Holt K."/>
            <person name="Panagiotidis G."/>
            <person name="Lovell J."/>
            <person name="Beasley H."/>
            <person name="Henderson C."/>
            <person name="Gordon D."/>
            <person name="Auger K."/>
            <person name="Wright D."/>
            <person name="Collins J."/>
            <person name="Raisen C."/>
            <person name="Dyer L."/>
            <person name="Leung K."/>
            <person name="Robertson L."/>
            <person name="Ambridge K."/>
            <person name="Leongamornlert D."/>
            <person name="McGuire S."/>
            <person name="Gilderthorp R."/>
            <person name="Griffiths C."/>
            <person name="Manthravadi D."/>
            <person name="Nichol S."/>
            <person name="Barker G."/>
            <person name="Whitehead S."/>
            <person name="Kay M."/>
            <person name="Brown J."/>
            <person name="Murnane C."/>
            <person name="Gray E."/>
            <person name="Humphries M."/>
            <person name="Sycamore N."/>
            <person name="Barker D."/>
            <person name="Saunders D."/>
            <person name="Wallis J."/>
            <person name="Babbage A."/>
            <person name="Hammond S."/>
            <person name="Mashreghi-Mohammadi M."/>
            <person name="Barr L."/>
            <person name="Martin S."/>
            <person name="Wray P."/>
            <person name="Ellington A."/>
            <person name="Matthews N."/>
            <person name="Ellwood M."/>
            <person name="Woodmansey R."/>
            <person name="Clark G."/>
            <person name="Cooper J."/>
            <person name="Tromans A."/>
            <person name="Grafham D."/>
            <person name="Skuce C."/>
            <person name="Pandian R."/>
            <person name="Andrews R."/>
            <person name="Harrison E."/>
            <person name="Kimberley A."/>
            <person name="Garnett J."/>
            <person name="Fosker N."/>
            <person name="Hall R."/>
            <person name="Garner P."/>
            <person name="Kelly D."/>
            <person name="Bird C."/>
            <person name="Palmer S."/>
            <person name="Gehring I."/>
            <person name="Berger A."/>
            <person name="Dooley C.M."/>
            <person name="Ersan-Urun Z."/>
            <person name="Eser C."/>
            <person name="Geiger H."/>
            <person name="Geisler M."/>
            <person name="Karotki L."/>
            <person name="Kirn A."/>
            <person name="Konantz J."/>
            <person name="Konantz M."/>
            <person name="Oberlander M."/>
            <person name="Rudolph-Geiger S."/>
            <person name="Teucke M."/>
            <person name="Lanz C."/>
            <person name="Raddatz G."/>
            <person name="Osoegawa K."/>
            <person name="Zhu B."/>
            <person name="Rapp A."/>
            <person name="Widaa S."/>
            <person name="Langford C."/>
            <person name="Yang F."/>
            <person name="Schuster S.C."/>
            <person name="Carter N.P."/>
            <person name="Harrow J."/>
            <person name="Ning Z."/>
            <person name="Herrero J."/>
            <person name="Searle S.M."/>
            <person name="Enright A."/>
            <person name="Geisler R."/>
            <person name="Plasterk R.H."/>
            <person name="Lee C."/>
            <person name="Westerfield M."/>
            <person name="de Jong P.J."/>
            <person name="Zon L.I."/>
            <person name="Postlethwait J.H."/>
            <person name="Nusslein-Volhard C."/>
            <person name="Hubbard T.J."/>
            <person name="Roest Crollius H."/>
            <person name="Rogers J."/>
            <person name="Stemple D.L."/>
        </authorList>
    </citation>
    <scope>NUCLEOTIDE SEQUENCE [LARGE SCALE GENOMIC DNA]</scope>
    <source>
        <strain>Tuebingen</strain>
    </source>
</reference>